<gene>
    <name evidence="1" type="primary">rpmC</name>
    <name type="ordered locus">Bpro_0264</name>
</gene>
<reference key="1">
    <citation type="journal article" date="2008" name="Appl. Environ. Microbiol.">
        <title>The genome of Polaromonas sp. strain JS666: insights into the evolution of a hydrocarbon- and xenobiotic-degrading bacterium, and features of relevance to biotechnology.</title>
        <authorList>
            <person name="Mattes T.E."/>
            <person name="Alexander A.K."/>
            <person name="Richardson P.M."/>
            <person name="Munk A.C."/>
            <person name="Han C.S."/>
            <person name="Stothard P."/>
            <person name="Coleman N.V."/>
        </authorList>
    </citation>
    <scope>NUCLEOTIDE SEQUENCE [LARGE SCALE GENOMIC DNA]</scope>
    <source>
        <strain>JS666 / ATCC BAA-500</strain>
    </source>
</reference>
<comment type="similarity">
    <text evidence="1">Belongs to the universal ribosomal protein uL29 family.</text>
</comment>
<sequence length="69" mass="7755">MTKSTELRQKDVAGLKTEVKELQKAHFGLRMQKATQQLTNTSTLRSTRRSIARAKTILAETIVKQGAKK</sequence>
<dbReference type="EMBL" id="CP000316">
    <property type="protein sequence ID" value="ABE42229.1"/>
    <property type="molecule type" value="Genomic_DNA"/>
</dbReference>
<dbReference type="RefSeq" id="WP_011481236.1">
    <property type="nucleotide sequence ID" value="NC_007948.1"/>
</dbReference>
<dbReference type="SMR" id="Q12GW3"/>
<dbReference type="STRING" id="296591.Bpro_0264"/>
<dbReference type="KEGG" id="pol:Bpro_0264"/>
<dbReference type="eggNOG" id="COG0255">
    <property type="taxonomic scope" value="Bacteria"/>
</dbReference>
<dbReference type="HOGENOM" id="CLU_158491_1_1_4"/>
<dbReference type="OrthoDB" id="9815192at2"/>
<dbReference type="Proteomes" id="UP000001983">
    <property type="component" value="Chromosome"/>
</dbReference>
<dbReference type="GO" id="GO:0022625">
    <property type="term" value="C:cytosolic large ribosomal subunit"/>
    <property type="evidence" value="ECO:0007669"/>
    <property type="project" value="TreeGrafter"/>
</dbReference>
<dbReference type="GO" id="GO:0003735">
    <property type="term" value="F:structural constituent of ribosome"/>
    <property type="evidence" value="ECO:0007669"/>
    <property type="project" value="InterPro"/>
</dbReference>
<dbReference type="GO" id="GO:0006412">
    <property type="term" value="P:translation"/>
    <property type="evidence" value="ECO:0007669"/>
    <property type="project" value="UniProtKB-UniRule"/>
</dbReference>
<dbReference type="CDD" id="cd00427">
    <property type="entry name" value="Ribosomal_L29_HIP"/>
    <property type="match status" value="1"/>
</dbReference>
<dbReference type="FunFam" id="1.10.287.310:FF:000001">
    <property type="entry name" value="50S ribosomal protein L29"/>
    <property type="match status" value="1"/>
</dbReference>
<dbReference type="Gene3D" id="1.10.287.310">
    <property type="match status" value="1"/>
</dbReference>
<dbReference type="HAMAP" id="MF_00374">
    <property type="entry name" value="Ribosomal_uL29"/>
    <property type="match status" value="1"/>
</dbReference>
<dbReference type="InterPro" id="IPR050063">
    <property type="entry name" value="Ribosomal_protein_uL29"/>
</dbReference>
<dbReference type="InterPro" id="IPR001854">
    <property type="entry name" value="Ribosomal_uL29"/>
</dbReference>
<dbReference type="InterPro" id="IPR018254">
    <property type="entry name" value="Ribosomal_uL29_CS"/>
</dbReference>
<dbReference type="InterPro" id="IPR036049">
    <property type="entry name" value="Ribosomal_uL29_sf"/>
</dbReference>
<dbReference type="NCBIfam" id="TIGR00012">
    <property type="entry name" value="L29"/>
    <property type="match status" value="1"/>
</dbReference>
<dbReference type="PANTHER" id="PTHR10916">
    <property type="entry name" value="60S RIBOSOMAL PROTEIN L35/50S RIBOSOMAL PROTEIN L29"/>
    <property type="match status" value="1"/>
</dbReference>
<dbReference type="PANTHER" id="PTHR10916:SF0">
    <property type="entry name" value="LARGE RIBOSOMAL SUBUNIT PROTEIN UL29C"/>
    <property type="match status" value="1"/>
</dbReference>
<dbReference type="Pfam" id="PF00831">
    <property type="entry name" value="Ribosomal_L29"/>
    <property type="match status" value="1"/>
</dbReference>
<dbReference type="SUPFAM" id="SSF46561">
    <property type="entry name" value="Ribosomal protein L29 (L29p)"/>
    <property type="match status" value="1"/>
</dbReference>
<dbReference type="PROSITE" id="PS00579">
    <property type="entry name" value="RIBOSOMAL_L29"/>
    <property type="match status" value="1"/>
</dbReference>
<name>RL29_POLSJ</name>
<accession>Q12GW3</accession>
<evidence type="ECO:0000255" key="1">
    <source>
        <dbReference type="HAMAP-Rule" id="MF_00374"/>
    </source>
</evidence>
<evidence type="ECO:0000305" key="2"/>
<feature type="chain" id="PRO_1000007550" description="Large ribosomal subunit protein uL29">
    <location>
        <begin position="1"/>
        <end position="69"/>
    </location>
</feature>
<protein>
    <recommendedName>
        <fullName evidence="1">Large ribosomal subunit protein uL29</fullName>
    </recommendedName>
    <alternativeName>
        <fullName evidence="2">50S ribosomal protein L29</fullName>
    </alternativeName>
</protein>
<proteinExistence type="inferred from homology"/>
<keyword id="KW-1185">Reference proteome</keyword>
<keyword id="KW-0687">Ribonucleoprotein</keyword>
<keyword id="KW-0689">Ribosomal protein</keyword>
<organism>
    <name type="scientific">Polaromonas sp. (strain JS666 / ATCC BAA-500)</name>
    <dbReference type="NCBI Taxonomy" id="296591"/>
    <lineage>
        <taxon>Bacteria</taxon>
        <taxon>Pseudomonadati</taxon>
        <taxon>Pseudomonadota</taxon>
        <taxon>Betaproteobacteria</taxon>
        <taxon>Burkholderiales</taxon>
        <taxon>Comamonadaceae</taxon>
        <taxon>Polaromonas</taxon>
    </lineage>
</organism>